<comment type="function">
    <text evidence="1">The RuvA-RuvB-RuvC complex processes Holliday junction (HJ) DNA during genetic recombination and DNA repair, while the RuvA-RuvB complex plays an important role in the rescue of blocked DNA replication forks via replication fork reversal (RFR). RuvA specifically binds to HJ cruciform DNA, conferring on it an open structure. The RuvB hexamer acts as an ATP-dependent pump, pulling dsDNA into and through the RuvAB complex. RuvB forms 2 homohexamers on either side of HJ DNA bound by 1 or 2 RuvA tetramers; 4 subunits per hexamer contact DNA at a time. Coordinated motions by a converter formed by DNA-disengaged RuvB subunits stimulates ATP hydrolysis and nucleotide exchange. Immobilization of the converter enables RuvB to convert the ATP-contained energy into a lever motion, pulling 2 nucleotides of DNA out of the RuvA tetramer per ATP hydrolyzed, thus driving DNA branch migration. The RuvB motors rotate together with the DNA substrate, which together with the progressing nucleotide cycle form the mechanistic basis for DNA recombination by continuous HJ branch migration. Branch migration allows RuvC to scan DNA until it finds its consensus sequence, where it cleaves and resolves cruciform DNA.</text>
</comment>
<comment type="catalytic activity">
    <reaction evidence="1">
        <text>ATP + H2O = ADP + phosphate + H(+)</text>
        <dbReference type="Rhea" id="RHEA:13065"/>
        <dbReference type="ChEBI" id="CHEBI:15377"/>
        <dbReference type="ChEBI" id="CHEBI:15378"/>
        <dbReference type="ChEBI" id="CHEBI:30616"/>
        <dbReference type="ChEBI" id="CHEBI:43474"/>
        <dbReference type="ChEBI" id="CHEBI:456216"/>
    </reaction>
</comment>
<comment type="subunit">
    <text evidence="1">Homohexamer. Forms an RuvA(8)-RuvB(12)-Holliday junction (HJ) complex. HJ DNA is sandwiched between 2 RuvA tetramers; dsDNA enters through RuvA and exits via RuvB. An RuvB hexamer assembles on each DNA strand where it exits the tetramer. Each RuvB hexamer is contacted by two RuvA subunits (via domain III) on 2 adjacent RuvB subunits; this complex drives branch migration. In the full resolvosome a probable DNA-RuvA(4)-RuvB(12)-RuvC(2) complex forms which resolves the HJ.</text>
</comment>
<comment type="subcellular location">
    <subcellularLocation>
        <location evidence="1">Cytoplasm</location>
    </subcellularLocation>
</comment>
<comment type="domain">
    <text evidence="1">Has 3 domains, the large (RuvB-L) and small ATPase (RuvB-S) domains and the C-terminal head (RuvB-H) domain. The head domain binds DNA, while the ATPase domains jointly bind ATP, ADP or are empty depending on the state of the subunit in the translocation cycle. During a single DNA translocation step the structure of each domain remains the same, but their relative positions change.</text>
</comment>
<comment type="similarity">
    <text evidence="1">Belongs to the RuvB family.</text>
</comment>
<organism>
    <name type="scientific">Colwellia psychrerythraea (strain 34H / ATCC BAA-681)</name>
    <name type="common">Vibrio psychroerythus</name>
    <dbReference type="NCBI Taxonomy" id="167879"/>
    <lineage>
        <taxon>Bacteria</taxon>
        <taxon>Pseudomonadati</taxon>
        <taxon>Pseudomonadota</taxon>
        <taxon>Gammaproteobacteria</taxon>
        <taxon>Alteromonadales</taxon>
        <taxon>Colwelliaceae</taxon>
        <taxon>Colwellia</taxon>
    </lineage>
</organism>
<reference key="1">
    <citation type="journal article" date="2005" name="Proc. Natl. Acad. Sci. U.S.A.">
        <title>The psychrophilic lifestyle as revealed by the genome sequence of Colwellia psychrerythraea 34H through genomic and proteomic analyses.</title>
        <authorList>
            <person name="Methe B.A."/>
            <person name="Nelson K.E."/>
            <person name="Deming J.W."/>
            <person name="Momen B."/>
            <person name="Melamud E."/>
            <person name="Zhang X."/>
            <person name="Moult J."/>
            <person name="Madupu R."/>
            <person name="Nelson W.C."/>
            <person name="Dodson R.J."/>
            <person name="Brinkac L.M."/>
            <person name="Daugherty S.C."/>
            <person name="Durkin A.S."/>
            <person name="DeBoy R.T."/>
            <person name="Kolonay J.F."/>
            <person name="Sullivan S.A."/>
            <person name="Zhou L."/>
            <person name="Davidsen T.M."/>
            <person name="Wu M."/>
            <person name="Huston A.L."/>
            <person name="Lewis M."/>
            <person name="Weaver B."/>
            <person name="Weidman J.F."/>
            <person name="Khouri H."/>
            <person name="Utterback T.R."/>
            <person name="Feldblyum T.V."/>
            <person name="Fraser C.M."/>
        </authorList>
    </citation>
    <scope>NUCLEOTIDE SEQUENCE [LARGE SCALE GENOMIC DNA]</scope>
    <source>
        <strain>34H / ATCC BAA-681</strain>
    </source>
</reference>
<keyword id="KW-0067">ATP-binding</keyword>
<keyword id="KW-0963">Cytoplasm</keyword>
<keyword id="KW-0227">DNA damage</keyword>
<keyword id="KW-0233">DNA recombination</keyword>
<keyword id="KW-0234">DNA repair</keyword>
<keyword id="KW-0238">DNA-binding</keyword>
<keyword id="KW-0378">Hydrolase</keyword>
<keyword id="KW-0547">Nucleotide-binding</keyword>
<accession>Q483C4</accession>
<evidence type="ECO:0000255" key="1">
    <source>
        <dbReference type="HAMAP-Rule" id="MF_00016"/>
    </source>
</evidence>
<feature type="chain" id="PRO_0000235360" description="Holliday junction branch migration complex subunit RuvB">
    <location>
        <begin position="1"/>
        <end position="337"/>
    </location>
</feature>
<feature type="region of interest" description="Large ATPase domain (RuvB-L)" evidence="1">
    <location>
        <begin position="4"/>
        <end position="184"/>
    </location>
</feature>
<feature type="region of interest" description="Small ATPAse domain (RuvB-S)" evidence="1">
    <location>
        <begin position="185"/>
        <end position="255"/>
    </location>
</feature>
<feature type="region of interest" description="Head domain (RuvB-H)" evidence="1">
    <location>
        <begin position="258"/>
        <end position="337"/>
    </location>
</feature>
<feature type="binding site" evidence="1">
    <location>
        <position position="23"/>
    </location>
    <ligand>
        <name>ATP</name>
        <dbReference type="ChEBI" id="CHEBI:30616"/>
    </ligand>
</feature>
<feature type="binding site" evidence="1">
    <location>
        <position position="24"/>
    </location>
    <ligand>
        <name>ATP</name>
        <dbReference type="ChEBI" id="CHEBI:30616"/>
    </ligand>
</feature>
<feature type="binding site" evidence="1">
    <location>
        <position position="65"/>
    </location>
    <ligand>
        <name>ATP</name>
        <dbReference type="ChEBI" id="CHEBI:30616"/>
    </ligand>
</feature>
<feature type="binding site" evidence="1">
    <location>
        <position position="68"/>
    </location>
    <ligand>
        <name>ATP</name>
        <dbReference type="ChEBI" id="CHEBI:30616"/>
    </ligand>
</feature>
<feature type="binding site" evidence="1">
    <location>
        <position position="69"/>
    </location>
    <ligand>
        <name>ATP</name>
        <dbReference type="ChEBI" id="CHEBI:30616"/>
    </ligand>
</feature>
<feature type="binding site" evidence="1">
    <location>
        <position position="69"/>
    </location>
    <ligand>
        <name>Mg(2+)</name>
        <dbReference type="ChEBI" id="CHEBI:18420"/>
    </ligand>
</feature>
<feature type="binding site" evidence="1">
    <location>
        <position position="70"/>
    </location>
    <ligand>
        <name>ATP</name>
        <dbReference type="ChEBI" id="CHEBI:30616"/>
    </ligand>
</feature>
<feature type="binding site" evidence="1">
    <location>
        <begin position="131"/>
        <end position="133"/>
    </location>
    <ligand>
        <name>ATP</name>
        <dbReference type="ChEBI" id="CHEBI:30616"/>
    </ligand>
</feature>
<feature type="binding site" evidence="1">
    <location>
        <position position="174"/>
    </location>
    <ligand>
        <name>ATP</name>
        <dbReference type="ChEBI" id="CHEBI:30616"/>
    </ligand>
</feature>
<feature type="binding site" evidence="1">
    <location>
        <position position="184"/>
    </location>
    <ligand>
        <name>ATP</name>
        <dbReference type="ChEBI" id="CHEBI:30616"/>
    </ligand>
</feature>
<feature type="binding site" evidence="1">
    <location>
        <position position="221"/>
    </location>
    <ligand>
        <name>ATP</name>
        <dbReference type="ChEBI" id="CHEBI:30616"/>
    </ligand>
</feature>
<feature type="binding site" evidence="1">
    <location>
        <position position="294"/>
    </location>
    <ligand>
        <name>DNA</name>
        <dbReference type="ChEBI" id="CHEBI:16991"/>
    </ligand>
</feature>
<feature type="binding site" evidence="1">
    <location>
        <position position="313"/>
    </location>
    <ligand>
        <name>DNA</name>
        <dbReference type="ChEBI" id="CHEBI:16991"/>
    </ligand>
</feature>
<feature type="binding site" evidence="1">
    <location>
        <position position="318"/>
    </location>
    <ligand>
        <name>DNA</name>
        <dbReference type="ChEBI" id="CHEBI:16991"/>
    </ligand>
</feature>
<gene>
    <name evidence="1" type="primary">ruvB</name>
    <name type="ordered locus">CPS_2117</name>
</gene>
<dbReference type="EC" id="3.6.4.-" evidence="1"/>
<dbReference type="EMBL" id="CP000083">
    <property type="protein sequence ID" value="AAZ24292.1"/>
    <property type="molecule type" value="Genomic_DNA"/>
</dbReference>
<dbReference type="RefSeq" id="WP_011042937.1">
    <property type="nucleotide sequence ID" value="NC_003910.7"/>
</dbReference>
<dbReference type="SMR" id="Q483C4"/>
<dbReference type="STRING" id="167879.CPS_2117"/>
<dbReference type="KEGG" id="cps:CPS_2117"/>
<dbReference type="eggNOG" id="COG2255">
    <property type="taxonomic scope" value="Bacteria"/>
</dbReference>
<dbReference type="HOGENOM" id="CLU_055599_1_0_6"/>
<dbReference type="Proteomes" id="UP000000547">
    <property type="component" value="Chromosome"/>
</dbReference>
<dbReference type="GO" id="GO:0005737">
    <property type="term" value="C:cytoplasm"/>
    <property type="evidence" value="ECO:0007669"/>
    <property type="project" value="UniProtKB-SubCell"/>
</dbReference>
<dbReference type="GO" id="GO:0048476">
    <property type="term" value="C:Holliday junction resolvase complex"/>
    <property type="evidence" value="ECO:0007669"/>
    <property type="project" value="UniProtKB-UniRule"/>
</dbReference>
<dbReference type="GO" id="GO:0005524">
    <property type="term" value="F:ATP binding"/>
    <property type="evidence" value="ECO:0007669"/>
    <property type="project" value="UniProtKB-UniRule"/>
</dbReference>
<dbReference type="GO" id="GO:0016887">
    <property type="term" value="F:ATP hydrolysis activity"/>
    <property type="evidence" value="ECO:0007669"/>
    <property type="project" value="InterPro"/>
</dbReference>
<dbReference type="GO" id="GO:0000400">
    <property type="term" value="F:four-way junction DNA binding"/>
    <property type="evidence" value="ECO:0007669"/>
    <property type="project" value="UniProtKB-UniRule"/>
</dbReference>
<dbReference type="GO" id="GO:0009378">
    <property type="term" value="F:four-way junction helicase activity"/>
    <property type="evidence" value="ECO:0007669"/>
    <property type="project" value="InterPro"/>
</dbReference>
<dbReference type="GO" id="GO:0006310">
    <property type="term" value="P:DNA recombination"/>
    <property type="evidence" value="ECO:0007669"/>
    <property type="project" value="UniProtKB-UniRule"/>
</dbReference>
<dbReference type="GO" id="GO:0006281">
    <property type="term" value="P:DNA repair"/>
    <property type="evidence" value="ECO:0007669"/>
    <property type="project" value="UniProtKB-UniRule"/>
</dbReference>
<dbReference type="CDD" id="cd00009">
    <property type="entry name" value="AAA"/>
    <property type="match status" value="1"/>
</dbReference>
<dbReference type="FunFam" id="1.10.10.10:FF:000086">
    <property type="entry name" value="Holliday junction ATP-dependent DNA helicase RuvB"/>
    <property type="match status" value="1"/>
</dbReference>
<dbReference type="FunFam" id="1.10.8.60:FF:000023">
    <property type="entry name" value="Holliday junction ATP-dependent DNA helicase RuvB"/>
    <property type="match status" value="1"/>
</dbReference>
<dbReference type="FunFam" id="3.40.50.300:FF:000073">
    <property type="entry name" value="Holliday junction ATP-dependent DNA helicase RuvB"/>
    <property type="match status" value="1"/>
</dbReference>
<dbReference type="Gene3D" id="1.10.8.60">
    <property type="match status" value="1"/>
</dbReference>
<dbReference type="Gene3D" id="3.40.50.300">
    <property type="entry name" value="P-loop containing nucleotide triphosphate hydrolases"/>
    <property type="match status" value="1"/>
</dbReference>
<dbReference type="Gene3D" id="1.10.10.10">
    <property type="entry name" value="Winged helix-like DNA-binding domain superfamily/Winged helix DNA-binding domain"/>
    <property type="match status" value="1"/>
</dbReference>
<dbReference type="HAMAP" id="MF_00016">
    <property type="entry name" value="DNA_HJ_migration_RuvB"/>
    <property type="match status" value="1"/>
</dbReference>
<dbReference type="InterPro" id="IPR003593">
    <property type="entry name" value="AAA+_ATPase"/>
</dbReference>
<dbReference type="InterPro" id="IPR041445">
    <property type="entry name" value="AAA_lid_4"/>
</dbReference>
<dbReference type="InterPro" id="IPR004605">
    <property type="entry name" value="DNA_helicase_Holl-junc_RuvB"/>
</dbReference>
<dbReference type="InterPro" id="IPR027417">
    <property type="entry name" value="P-loop_NTPase"/>
</dbReference>
<dbReference type="InterPro" id="IPR008824">
    <property type="entry name" value="RuvB-like_N"/>
</dbReference>
<dbReference type="InterPro" id="IPR008823">
    <property type="entry name" value="RuvB_C"/>
</dbReference>
<dbReference type="InterPro" id="IPR036388">
    <property type="entry name" value="WH-like_DNA-bd_sf"/>
</dbReference>
<dbReference type="InterPro" id="IPR036390">
    <property type="entry name" value="WH_DNA-bd_sf"/>
</dbReference>
<dbReference type="NCBIfam" id="NF000868">
    <property type="entry name" value="PRK00080.1"/>
    <property type="match status" value="1"/>
</dbReference>
<dbReference type="NCBIfam" id="TIGR00635">
    <property type="entry name" value="ruvB"/>
    <property type="match status" value="1"/>
</dbReference>
<dbReference type="PANTHER" id="PTHR42848">
    <property type="match status" value="1"/>
</dbReference>
<dbReference type="PANTHER" id="PTHR42848:SF1">
    <property type="entry name" value="HOLLIDAY JUNCTION BRANCH MIGRATION COMPLEX SUBUNIT RUVB"/>
    <property type="match status" value="1"/>
</dbReference>
<dbReference type="Pfam" id="PF17864">
    <property type="entry name" value="AAA_lid_4"/>
    <property type="match status" value="1"/>
</dbReference>
<dbReference type="Pfam" id="PF05491">
    <property type="entry name" value="RuvB_C"/>
    <property type="match status" value="1"/>
</dbReference>
<dbReference type="Pfam" id="PF05496">
    <property type="entry name" value="RuvB_N"/>
    <property type="match status" value="1"/>
</dbReference>
<dbReference type="SMART" id="SM00382">
    <property type="entry name" value="AAA"/>
    <property type="match status" value="1"/>
</dbReference>
<dbReference type="SUPFAM" id="SSF52540">
    <property type="entry name" value="P-loop containing nucleoside triphosphate hydrolases"/>
    <property type="match status" value="1"/>
</dbReference>
<dbReference type="SUPFAM" id="SSF46785">
    <property type="entry name" value="Winged helix' DNA-binding domain"/>
    <property type="match status" value="1"/>
</dbReference>
<protein>
    <recommendedName>
        <fullName evidence="1">Holliday junction branch migration complex subunit RuvB</fullName>
        <ecNumber evidence="1">3.6.4.-</ecNumber>
    </recommendedName>
</protein>
<proteinExistence type="inferred from homology"/>
<name>RUVB_COLP3</name>
<sequence>MIEADRLIEPIASVEDERVDRAIRPKMLQDYTGQQHVKAQMEIFIPAAKNRGEPLDHLLIFGPPGLGKTTLANIVANEMGVNIRTTSGPVLEKAGDLAALLTNLEENDILFIDEIHRLSAVVEEILYPAMEDYQLDIMIGEGPAARSIKLDLPPFTLIGATTRAGALTSPLRDRFGIVQRLEFYNVADLSTIVSRSAHFLNLTIDEEGAFEVARRSRGTPRIANRLLRRVRDYADIKSHGVVNQQTAAAALDMLEVDSEGFDIMDRKLLHAIIDKFMGGPVGLDNVAAAIGEERETIEDVIEPFLIQQGFLQRTPRGRIATDRAYQHFGITKDQTKD</sequence>